<organism>
    <name type="scientific">Burkholderia cenocepacia (strain HI2424)</name>
    <dbReference type="NCBI Taxonomy" id="331272"/>
    <lineage>
        <taxon>Bacteria</taxon>
        <taxon>Pseudomonadati</taxon>
        <taxon>Pseudomonadota</taxon>
        <taxon>Betaproteobacteria</taxon>
        <taxon>Burkholderiales</taxon>
        <taxon>Burkholderiaceae</taxon>
        <taxon>Burkholderia</taxon>
        <taxon>Burkholderia cepacia complex</taxon>
    </lineage>
</organism>
<evidence type="ECO:0000255" key="1">
    <source>
        <dbReference type="HAMAP-Rule" id="MF_00456"/>
    </source>
</evidence>
<feature type="chain" id="PRO_1000081041" description="Glutamate 5-kinase">
    <location>
        <begin position="1"/>
        <end position="372"/>
    </location>
</feature>
<feature type="domain" description="PUA" evidence="1">
    <location>
        <begin position="280"/>
        <end position="358"/>
    </location>
</feature>
<feature type="binding site" evidence="1">
    <location>
        <position position="14"/>
    </location>
    <ligand>
        <name>ATP</name>
        <dbReference type="ChEBI" id="CHEBI:30616"/>
    </ligand>
</feature>
<feature type="binding site" evidence="1">
    <location>
        <position position="54"/>
    </location>
    <ligand>
        <name>substrate</name>
    </ligand>
</feature>
<feature type="binding site" evidence="1">
    <location>
        <position position="141"/>
    </location>
    <ligand>
        <name>substrate</name>
    </ligand>
</feature>
<feature type="binding site" evidence="1">
    <location>
        <position position="153"/>
    </location>
    <ligand>
        <name>substrate</name>
    </ligand>
</feature>
<feature type="binding site" evidence="1">
    <location>
        <begin position="173"/>
        <end position="174"/>
    </location>
    <ligand>
        <name>ATP</name>
        <dbReference type="ChEBI" id="CHEBI:30616"/>
    </ligand>
</feature>
<proteinExistence type="inferred from homology"/>
<name>PROB_BURCH</name>
<gene>
    <name evidence="1" type="primary">proB</name>
    <name type="ordered locus">Bcen2424_0584</name>
</gene>
<keyword id="KW-0028">Amino-acid biosynthesis</keyword>
<keyword id="KW-0067">ATP-binding</keyword>
<keyword id="KW-0963">Cytoplasm</keyword>
<keyword id="KW-0418">Kinase</keyword>
<keyword id="KW-0547">Nucleotide-binding</keyword>
<keyword id="KW-0641">Proline biosynthesis</keyword>
<keyword id="KW-0808">Transferase</keyword>
<comment type="function">
    <text evidence="1">Catalyzes the transfer of a phosphate group to glutamate to form L-glutamate 5-phosphate.</text>
</comment>
<comment type="catalytic activity">
    <reaction evidence="1">
        <text>L-glutamate + ATP = L-glutamyl 5-phosphate + ADP</text>
        <dbReference type="Rhea" id="RHEA:14877"/>
        <dbReference type="ChEBI" id="CHEBI:29985"/>
        <dbReference type="ChEBI" id="CHEBI:30616"/>
        <dbReference type="ChEBI" id="CHEBI:58274"/>
        <dbReference type="ChEBI" id="CHEBI:456216"/>
        <dbReference type="EC" id="2.7.2.11"/>
    </reaction>
</comment>
<comment type="pathway">
    <text evidence="1">Amino-acid biosynthesis; L-proline biosynthesis; L-glutamate 5-semialdehyde from L-glutamate: step 1/2.</text>
</comment>
<comment type="subcellular location">
    <subcellularLocation>
        <location evidence="1">Cytoplasm</location>
    </subcellularLocation>
</comment>
<comment type="similarity">
    <text evidence="1">Belongs to the glutamate 5-kinase family.</text>
</comment>
<reference key="1">
    <citation type="submission" date="2006-08" db="EMBL/GenBank/DDBJ databases">
        <title>Complete sequence of chromosome 1 of Burkholderia cenocepacia HI2424.</title>
        <authorList>
            <person name="Copeland A."/>
            <person name="Lucas S."/>
            <person name="Lapidus A."/>
            <person name="Barry K."/>
            <person name="Detter J.C."/>
            <person name="Glavina del Rio T."/>
            <person name="Hammon N."/>
            <person name="Israni S."/>
            <person name="Pitluck S."/>
            <person name="Chain P."/>
            <person name="Malfatti S."/>
            <person name="Shin M."/>
            <person name="Vergez L."/>
            <person name="Schmutz J."/>
            <person name="Larimer F."/>
            <person name="Land M."/>
            <person name="Hauser L."/>
            <person name="Kyrpides N."/>
            <person name="Kim E."/>
            <person name="LiPuma J.J."/>
            <person name="Gonzalez C.F."/>
            <person name="Konstantinidis K."/>
            <person name="Tiedje J.M."/>
            <person name="Richardson P."/>
        </authorList>
    </citation>
    <scope>NUCLEOTIDE SEQUENCE [LARGE SCALE GENOMIC DNA]</scope>
    <source>
        <strain>HI2424</strain>
    </source>
</reference>
<sequence>MRSIIADSKRLVVKVGSSLVTNDGKGLDHAAIGRWAAQIAALRAQGKEVVLVSSGAIAEGMQRLGWSKRPREIDELQAAAAVGQMGLAQVYESRFTEHGIRTAQILLTHADLADRERYLNARSTLLTLLRLGVVPIINENDTVVTDEIKFGDNDTLGALVANLIEGDALIILTDQSGLFTADPRKDPNATLVGEANAGAPELEAMAGGAGSSLGRGGMLTKILAAKRAAHSGANTVIASGREADVLVRLAAGEAIGTQLIARTARMAARKQWMADHLQVRGHVVIDAGAVEKLTAGGKSLLPIGVIDVQGAFARGEVIACVGPDGREVARGLTNYSSAETKLIHRKPSGEIETVLGYMLEPELIHRDNLVLV</sequence>
<dbReference type="EC" id="2.7.2.11" evidence="1"/>
<dbReference type="EMBL" id="CP000458">
    <property type="protein sequence ID" value="ABK07338.1"/>
    <property type="molecule type" value="Genomic_DNA"/>
</dbReference>
<dbReference type="RefSeq" id="WP_006476997.1">
    <property type="nucleotide sequence ID" value="NC_008542.1"/>
</dbReference>
<dbReference type="SMR" id="A0K4B1"/>
<dbReference type="GeneID" id="56557023"/>
<dbReference type="KEGG" id="bch:Bcen2424_0584"/>
<dbReference type="HOGENOM" id="CLU_025400_2_0_4"/>
<dbReference type="UniPathway" id="UPA00098">
    <property type="reaction ID" value="UER00359"/>
</dbReference>
<dbReference type="GO" id="GO:0005829">
    <property type="term" value="C:cytosol"/>
    <property type="evidence" value="ECO:0007669"/>
    <property type="project" value="TreeGrafter"/>
</dbReference>
<dbReference type="GO" id="GO:0005524">
    <property type="term" value="F:ATP binding"/>
    <property type="evidence" value="ECO:0007669"/>
    <property type="project" value="UniProtKB-KW"/>
</dbReference>
<dbReference type="GO" id="GO:0004349">
    <property type="term" value="F:glutamate 5-kinase activity"/>
    <property type="evidence" value="ECO:0007669"/>
    <property type="project" value="UniProtKB-UniRule"/>
</dbReference>
<dbReference type="GO" id="GO:0003723">
    <property type="term" value="F:RNA binding"/>
    <property type="evidence" value="ECO:0007669"/>
    <property type="project" value="InterPro"/>
</dbReference>
<dbReference type="GO" id="GO:0055129">
    <property type="term" value="P:L-proline biosynthetic process"/>
    <property type="evidence" value="ECO:0007669"/>
    <property type="project" value="UniProtKB-UniRule"/>
</dbReference>
<dbReference type="CDD" id="cd04242">
    <property type="entry name" value="AAK_G5K_ProB"/>
    <property type="match status" value="1"/>
</dbReference>
<dbReference type="CDD" id="cd21157">
    <property type="entry name" value="PUA_G5K"/>
    <property type="match status" value="1"/>
</dbReference>
<dbReference type="FunFam" id="2.30.130.10:FF:000007">
    <property type="entry name" value="Glutamate 5-kinase"/>
    <property type="match status" value="1"/>
</dbReference>
<dbReference type="FunFam" id="3.40.1160.10:FF:000018">
    <property type="entry name" value="Glutamate 5-kinase"/>
    <property type="match status" value="1"/>
</dbReference>
<dbReference type="Gene3D" id="3.40.1160.10">
    <property type="entry name" value="Acetylglutamate kinase-like"/>
    <property type="match status" value="1"/>
</dbReference>
<dbReference type="Gene3D" id="2.30.130.10">
    <property type="entry name" value="PUA domain"/>
    <property type="match status" value="1"/>
</dbReference>
<dbReference type="HAMAP" id="MF_00456">
    <property type="entry name" value="ProB"/>
    <property type="match status" value="1"/>
</dbReference>
<dbReference type="InterPro" id="IPR036393">
    <property type="entry name" value="AceGlu_kinase-like_sf"/>
</dbReference>
<dbReference type="InterPro" id="IPR001048">
    <property type="entry name" value="Asp/Glu/Uridylate_kinase"/>
</dbReference>
<dbReference type="InterPro" id="IPR041739">
    <property type="entry name" value="G5K_ProB"/>
</dbReference>
<dbReference type="InterPro" id="IPR001057">
    <property type="entry name" value="Glu/AcGlu_kinase"/>
</dbReference>
<dbReference type="InterPro" id="IPR011529">
    <property type="entry name" value="Glu_5kinase"/>
</dbReference>
<dbReference type="InterPro" id="IPR005715">
    <property type="entry name" value="Glu_5kinase/COase_Synthase"/>
</dbReference>
<dbReference type="InterPro" id="IPR019797">
    <property type="entry name" value="Glutamate_5-kinase_CS"/>
</dbReference>
<dbReference type="InterPro" id="IPR002478">
    <property type="entry name" value="PUA"/>
</dbReference>
<dbReference type="InterPro" id="IPR015947">
    <property type="entry name" value="PUA-like_sf"/>
</dbReference>
<dbReference type="InterPro" id="IPR036974">
    <property type="entry name" value="PUA_sf"/>
</dbReference>
<dbReference type="NCBIfam" id="TIGR01027">
    <property type="entry name" value="proB"/>
    <property type="match status" value="1"/>
</dbReference>
<dbReference type="PANTHER" id="PTHR43654">
    <property type="entry name" value="GLUTAMATE 5-KINASE"/>
    <property type="match status" value="1"/>
</dbReference>
<dbReference type="PANTHER" id="PTHR43654:SF1">
    <property type="entry name" value="ISOPENTENYL PHOSPHATE KINASE"/>
    <property type="match status" value="1"/>
</dbReference>
<dbReference type="Pfam" id="PF00696">
    <property type="entry name" value="AA_kinase"/>
    <property type="match status" value="1"/>
</dbReference>
<dbReference type="Pfam" id="PF01472">
    <property type="entry name" value="PUA"/>
    <property type="match status" value="1"/>
</dbReference>
<dbReference type="PIRSF" id="PIRSF000729">
    <property type="entry name" value="GK"/>
    <property type="match status" value="1"/>
</dbReference>
<dbReference type="PRINTS" id="PR00474">
    <property type="entry name" value="GLU5KINASE"/>
</dbReference>
<dbReference type="SMART" id="SM00359">
    <property type="entry name" value="PUA"/>
    <property type="match status" value="1"/>
</dbReference>
<dbReference type="SUPFAM" id="SSF53633">
    <property type="entry name" value="Carbamate kinase-like"/>
    <property type="match status" value="1"/>
</dbReference>
<dbReference type="SUPFAM" id="SSF88697">
    <property type="entry name" value="PUA domain-like"/>
    <property type="match status" value="1"/>
</dbReference>
<dbReference type="PROSITE" id="PS00902">
    <property type="entry name" value="GLUTAMATE_5_KINASE"/>
    <property type="match status" value="1"/>
</dbReference>
<dbReference type="PROSITE" id="PS50890">
    <property type="entry name" value="PUA"/>
    <property type="match status" value="1"/>
</dbReference>
<accession>A0K4B1</accession>
<protein>
    <recommendedName>
        <fullName evidence="1">Glutamate 5-kinase</fullName>
        <ecNumber evidence="1">2.7.2.11</ecNumber>
    </recommendedName>
    <alternativeName>
        <fullName evidence="1">Gamma-glutamyl kinase</fullName>
        <shortName evidence="1">GK</shortName>
    </alternativeName>
</protein>